<organism>
    <name type="scientific">Meyerozyma guilliermondii (strain ATCC 6260 / CBS 566 / DSM 6381 / JCM 1539 / NBRC 10279 / NRRL Y-324)</name>
    <name type="common">Yeast</name>
    <name type="synonym">Candida guilliermondii</name>
    <dbReference type="NCBI Taxonomy" id="294746"/>
    <lineage>
        <taxon>Eukaryota</taxon>
        <taxon>Fungi</taxon>
        <taxon>Dikarya</taxon>
        <taxon>Ascomycota</taxon>
        <taxon>Saccharomycotina</taxon>
        <taxon>Pichiomycetes</taxon>
        <taxon>Debaryomycetaceae</taxon>
        <taxon>Meyerozyma</taxon>
    </lineage>
</organism>
<protein>
    <recommendedName>
        <fullName>Stress response protein NST1</fullName>
    </recommendedName>
</protein>
<sequence>MDTTFGNGECEMFTSPHQKFCATQTSPSNMKEPDEPGVALKNGQGVHFDYHMHPEARKDSESTVVAGESHSEMPISSNGHNGTIAVPEGYGANSNGTSNKKKKKKSKKRHIDATINDPDAEYPTSRVIKQAPNGDVIVESLEDEHHDHHSNLSATIWDNSTIEEQEDLKRFWESLEEPEKVKLVKIDKKSILDLFRTFSSNQQGGQPTHHSPASSSTSLAGTPHHGCTCSSCGRRSSIIEAELEMIYDNHFDDIIDFIHEVRDIKDLNALPGLLFGGFHMLEEEHRMKKTRARRRSTDLQPQTRISPITSSTDGPPEPTTTSNVSTPSHSESVSSPSPWTNAVAGLLEKFLQENPGASWNKCSQLFQEIQEAGNQVNPGNGSSEGSDRENDDKKTAFLKDFGEMISGGFNDMTSGKQEQFHENFANGIHKIANDFLNNDGKSFVEMVEALSGSRSERADLLKSLQEIEDHSNQQEQPGTVREQIEELHDEEPVIPEDIQNQPKEVVGQYVDQRINQLSELRDRLEEEYDYDTYDDPEYDNQEYDEELSDTESEISEEEKMQEIRRLFLIQVIKLFQERLKNAYKEKLSQDRTRRLIEELEAEENAKKEKELKKLKQKEKAKEKKRLQQVAKDEERRRKEEEERAREEELRLKQEELRAEQKRRKEEARQKKEEEKRKRIEELRLKKEAEKKKQEEKERKERELKEKKERESKEKEEREMMEKKEQLKKEQQPKVEQTQEKPQAPPSQTSQSNPSVSDPISSRQDNSVSSLDPTHDLQNAISSGLEQLSLGQQPMSHISSQPSQSISQLPIQPPSQPFLDMDQIRSPVTAPAMPTQAQMPQSARGSLWGQPVNNFSPFSEGVWGSRNNSIWGNSSMSGGSIGSGTMGSGTIGSGTIGGSASIWGSQTPTLANTTMGMGLQSGINGIQGLSLEKENGSASIAGTPGNSLPGNSLPPISRNSLSGNSIPGSIPSSIPGNLSGSLPGNLSGSIPGSLPGNLAANSLPGMSPSMSVPLPQPFPANVDNEMIRTAAYQAFMLLQNSNQLEYGLAAAVKLYQTTILVLSMEVSFSQFLGSCRDDIESSYRFDYVYDDYGAVSHIKASLRSSLWN</sequence>
<evidence type="ECO:0000250" key="1"/>
<evidence type="ECO:0000255" key="2"/>
<evidence type="ECO:0000256" key="3">
    <source>
        <dbReference type="SAM" id="MobiDB-lite"/>
    </source>
</evidence>
<evidence type="ECO:0000305" key="4"/>
<feature type="chain" id="PRO_0000324457" description="Stress response protein NST1">
    <location>
        <begin position="1"/>
        <end position="1107"/>
    </location>
</feature>
<feature type="region of interest" description="Disordered" evidence="3">
    <location>
        <begin position="21"/>
        <end position="42"/>
    </location>
</feature>
<feature type="region of interest" description="Disordered" evidence="3">
    <location>
        <begin position="57"/>
        <end position="120"/>
    </location>
</feature>
<feature type="region of interest" description="Disordered" evidence="3">
    <location>
        <begin position="201"/>
        <end position="226"/>
    </location>
</feature>
<feature type="region of interest" description="Disordered" evidence="3">
    <location>
        <begin position="286"/>
        <end position="338"/>
    </location>
</feature>
<feature type="region of interest" description="Disordered" evidence="3">
    <location>
        <begin position="525"/>
        <end position="556"/>
    </location>
</feature>
<feature type="region of interest" description="Disordered" evidence="3">
    <location>
        <begin position="605"/>
        <end position="775"/>
    </location>
</feature>
<feature type="region of interest" description="Disordered" evidence="3">
    <location>
        <begin position="791"/>
        <end position="820"/>
    </location>
</feature>
<feature type="region of interest" description="Disordered" evidence="3">
    <location>
        <begin position="935"/>
        <end position="967"/>
    </location>
</feature>
<feature type="coiled-coil region" evidence="2">
    <location>
        <begin position="508"/>
        <end position="733"/>
    </location>
</feature>
<feature type="compositionally biased region" description="Basic residues" evidence="3">
    <location>
        <begin position="99"/>
        <end position="110"/>
    </location>
</feature>
<feature type="compositionally biased region" description="Low complexity" evidence="3">
    <location>
        <begin position="207"/>
        <end position="226"/>
    </location>
</feature>
<feature type="compositionally biased region" description="Polar residues" evidence="3">
    <location>
        <begin position="298"/>
        <end position="313"/>
    </location>
</feature>
<feature type="compositionally biased region" description="Low complexity" evidence="3">
    <location>
        <begin position="321"/>
        <end position="338"/>
    </location>
</feature>
<feature type="compositionally biased region" description="Basic and acidic residues" evidence="3">
    <location>
        <begin position="605"/>
        <end position="621"/>
    </location>
</feature>
<feature type="compositionally biased region" description="Basic and acidic residues" evidence="3">
    <location>
        <begin position="630"/>
        <end position="738"/>
    </location>
</feature>
<feature type="compositionally biased region" description="Polar residues" evidence="3">
    <location>
        <begin position="745"/>
        <end position="775"/>
    </location>
</feature>
<feature type="compositionally biased region" description="Low complexity" evidence="3">
    <location>
        <begin position="791"/>
        <end position="809"/>
    </location>
</feature>
<feature type="compositionally biased region" description="Polar residues" evidence="3">
    <location>
        <begin position="935"/>
        <end position="949"/>
    </location>
</feature>
<feature type="compositionally biased region" description="Low complexity" evidence="3">
    <location>
        <begin position="958"/>
        <end position="967"/>
    </location>
</feature>
<comment type="function">
    <text evidence="1">May act as a negative regulator of salt tolerance.</text>
</comment>
<comment type="subcellular location">
    <subcellularLocation>
        <location evidence="1">Cytoplasm</location>
    </subcellularLocation>
</comment>
<comment type="similarity">
    <text evidence="4">Belongs to the NST1 family.</text>
</comment>
<proteinExistence type="inferred from homology"/>
<gene>
    <name type="primary">NST1</name>
    <name type="ORF">PGUG_04149</name>
</gene>
<dbReference type="EMBL" id="CH408159">
    <property type="protein sequence ID" value="EDK40051.2"/>
    <property type="molecule type" value="Genomic_DNA"/>
</dbReference>
<dbReference type="RefSeq" id="XP_001483420.1">
    <property type="nucleotide sequence ID" value="XM_001483370.1"/>
</dbReference>
<dbReference type="SMR" id="A5DLJ8"/>
<dbReference type="GeneID" id="5125337"/>
<dbReference type="KEGG" id="pgu:PGUG_04149"/>
<dbReference type="VEuPathDB" id="FungiDB:PGUG_04149"/>
<dbReference type="eggNOG" id="ENOG502QSSK">
    <property type="taxonomic scope" value="Eukaryota"/>
</dbReference>
<dbReference type="HOGENOM" id="CLU_003284_0_0_1"/>
<dbReference type="InParanoid" id="A5DLJ8"/>
<dbReference type="OMA" id="ETYNIAY"/>
<dbReference type="OrthoDB" id="21629at2759"/>
<dbReference type="Proteomes" id="UP000001997">
    <property type="component" value="Unassembled WGS sequence"/>
</dbReference>
<dbReference type="GO" id="GO:0005737">
    <property type="term" value="C:cytoplasm"/>
    <property type="evidence" value="ECO:0007669"/>
    <property type="project" value="UniProtKB-SubCell"/>
</dbReference>
<dbReference type="InterPro" id="IPR025279">
    <property type="entry name" value="NST1"/>
</dbReference>
<dbReference type="Pfam" id="PF13945">
    <property type="entry name" value="NST1"/>
    <property type="match status" value="2"/>
</dbReference>
<accession>A5DLJ8</accession>
<name>NST1_PICGU</name>
<reference key="1">
    <citation type="journal article" date="2009" name="Nature">
        <title>Evolution of pathogenicity and sexual reproduction in eight Candida genomes.</title>
        <authorList>
            <person name="Butler G."/>
            <person name="Rasmussen M.D."/>
            <person name="Lin M.F."/>
            <person name="Santos M.A.S."/>
            <person name="Sakthikumar S."/>
            <person name="Munro C.A."/>
            <person name="Rheinbay E."/>
            <person name="Grabherr M."/>
            <person name="Forche A."/>
            <person name="Reedy J.L."/>
            <person name="Agrafioti I."/>
            <person name="Arnaud M.B."/>
            <person name="Bates S."/>
            <person name="Brown A.J.P."/>
            <person name="Brunke S."/>
            <person name="Costanzo M.C."/>
            <person name="Fitzpatrick D.A."/>
            <person name="de Groot P.W.J."/>
            <person name="Harris D."/>
            <person name="Hoyer L.L."/>
            <person name="Hube B."/>
            <person name="Klis F.M."/>
            <person name="Kodira C."/>
            <person name="Lennard N."/>
            <person name="Logue M.E."/>
            <person name="Martin R."/>
            <person name="Neiman A.M."/>
            <person name="Nikolaou E."/>
            <person name="Quail M.A."/>
            <person name="Quinn J."/>
            <person name="Santos M.C."/>
            <person name="Schmitzberger F.F."/>
            <person name="Sherlock G."/>
            <person name="Shah P."/>
            <person name="Silverstein K.A.T."/>
            <person name="Skrzypek M.S."/>
            <person name="Soll D."/>
            <person name="Staggs R."/>
            <person name="Stansfield I."/>
            <person name="Stumpf M.P.H."/>
            <person name="Sudbery P.E."/>
            <person name="Srikantha T."/>
            <person name="Zeng Q."/>
            <person name="Berman J."/>
            <person name="Berriman M."/>
            <person name="Heitman J."/>
            <person name="Gow N.A.R."/>
            <person name="Lorenz M.C."/>
            <person name="Birren B.W."/>
            <person name="Kellis M."/>
            <person name="Cuomo C.A."/>
        </authorList>
    </citation>
    <scope>NUCLEOTIDE SEQUENCE [LARGE SCALE GENOMIC DNA]</scope>
    <source>
        <strain>ATCC 6260 / CBS 566 / DSM 6381 / JCM 1539 / NBRC 10279 / NRRL Y-324</strain>
    </source>
</reference>
<keyword id="KW-0175">Coiled coil</keyword>
<keyword id="KW-0963">Cytoplasm</keyword>
<keyword id="KW-1185">Reference proteome</keyword>
<keyword id="KW-0346">Stress response</keyword>